<evidence type="ECO:0000250" key="1">
    <source>
        <dbReference type="UniProtKB" id="Q9BQG0"/>
    </source>
</evidence>
<evidence type="ECO:0000256" key="2">
    <source>
        <dbReference type="SAM" id="MobiDB-lite"/>
    </source>
</evidence>
<evidence type="ECO:0000269" key="3">
    <source>
    </source>
</evidence>
<evidence type="ECO:0000303" key="4">
    <source>
    </source>
</evidence>
<evidence type="ECO:0000305" key="5"/>
<evidence type="ECO:0000305" key="6">
    <source>
    </source>
</evidence>
<evidence type="ECO:0000312" key="7">
    <source>
        <dbReference type="EMBL" id="AAM50234.1"/>
    </source>
</evidence>
<evidence type="ECO:0000312" key="8">
    <source>
        <dbReference type="EMBL" id="AAX33415.1"/>
    </source>
</evidence>
<evidence type="ECO:0000312" key="9">
    <source>
        <dbReference type="EMBL" id="AGV77189.1"/>
    </source>
</evidence>
<evidence type="ECO:0000312" key="10">
    <source>
        <dbReference type="FlyBase" id="FBgn0001341"/>
    </source>
</evidence>
<evidence type="ECO:0000312" key="11">
    <source>
        <dbReference type="Proteomes" id="UP000000803"/>
    </source>
</evidence>
<comment type="function">
    <text evidence="3">Has a role in rRNA biogenesis, cell proliferation and tissue growth by contributing to the localization of nclb to the nucleolus.</text>
</comment>
<comment type="subunit">
    <text evidence="3">Interacts with nclb.</text>
</comment>
<comment type="subcellular location">
    <subcellularLocation>
        <location evidence="1">Cytoplasm</location>
    </subcellularLocation>
    <subcellularLocation>
        <location evidence="6">Nucleus</location>
    </subcellularLocation>
    <subcellularLocation>
        <location evidence="6">Nucleus</location>
        <location evidence="6">Nucleolus</location>
    </subcellularLocation>
</comment>
<comment type="disruption phenotype">
    <text evidence="3">Reduced rRNA transcription which results in larval reduced growth (PubMed:29065309). RNAi-mediated knockdown in the fat body results in the mislocalization of nclb from the nucleolus to the nucleoplasm (PubMed:29065309).</text>
</comment>
<comment type="similarity">
    <text evidence="5">Belongs to the MYBBP1A family.</text>
</comment>
<accession>Q9W5E4</accession>
<accession>Q5BIF7</accession>
<accession>Q8MRJ3</accession>
<organism evidence="11">
    <name type="scientific">Drosophila melanogaster</name>
    <name type="common">Fruit fly</name>
    <dbReference type="NCBI Taxonomy" id="7227"/>
    <lineage>
        <taxon>Eukaryota</taxon>
        <taxon>Metazoa</taxon>
        <taxon>Ecdysozoa</taxon>
        <taxon>Arthropoda</taxon>
        <taxon>Hexapoda</taxon>
        <taxon>Insecta</taxon>
        <taxon>Pterygota</taxon>
        <taxon>Neoptera</taxon>
        <taxon>Endopterygota</taxon>
        <taxon>Diptera</taxon>
        <taxon>Brachycera</taxon>
        <taxon>Muscomorpha</taxon>
        <taxon>Ephydroidea</taxon>
        <taxon>Drosophilidae</taxon>
        <taxon>Drosophila</taxon>
        <taxon>Sophophora</taxon>
    </lineage>
</organism>
<keyword id="KW-0963">Cytoplasm</keyword>
<keyword id="KW-0539">Nucleus</keyword>
<keyword id="KW-1185">Reference proteome</keyword>
<keyword id="KW-0690">Ribosome biogenesis</keyword>
<feature type="chain" id="PRO_0000445266" description="Myb-binding protein 1A" evidence="5">
    <location>
        <begin position="1"/>
        <end position="1133"/>
    </location>
</feature>
<feature type="region of interest" description="Disordered" evidence="2">
    <location>
        <begin position="1"/>
        <end position="62"/>
    </location>
</feature>
<feature type="region of interest" description="Disordered" evidence="2">
    <location>
        <begin position="718"/>
        <end position="764"/>
    </location>
</feature>
<feature type="region of interest" description="Disordered" evidence="2">
    <location>
        <begin position="924"/>
        <end position="943"/>
    </location>
</feature>
<feature type="region of interest" description="Disordered" evidence="2">
    <location>
        <begin position="1111"/>
        <end position="1133"/>
    </location>
</feature>
<feature type="compositionally biased region" description="Basic and acidic residues" evidence="2">
    <location>
        <begin position="20"/>
        <end position="35"/>
    </location>
</feature>
<feature type="compositionally biased region" description="Basic and acidic residues" evidence="2">
    <location>
        <begin position="50"/>
        <end position="60"/>
    </location>
</feature>
<feature type="compositionally biased region" description="Acidic residues" evidence="2">
    <location>
        <begin position="725"/>
        <end position="735"/>
    </location>
</feature>
<feature type="compositionally biased region" description="Acidic residues" evidence="2">
    <location>
        <begin position="744"/>
        <end position="762"/>
    </location>
</feature>
<feature type="sequence conflict" description="In Ref. 4; AAX33415." evidence="5" ref="4">
    <original>D</original>
    <variation>N</variation>
    <location>
        <position position="263"/>
    </location>
</feature>
<feature type="sequence conflict" description="In Ref. 4; AAX33415." evidence="5" ref="4">
    <original>P</original>
    <variation>S</variation>
    <location>
        <position position="817"/>
    </location>
</feature>
<dbReference type="EMBL" id="AE014298">
    <property type="protein sequence ID" value="AAF45532.1"/>
    <property type="molecule type" value="Genomic_DNA"/>
</dbReference>
<dbReference type="EMBL" id="AY119580">
    <property type="protein sequence ID" value="AAM50234.1"/>
    <property type="molecule type" value="mRNA"/>
</dbReference>
<dbReference type="EMBL" id="BT021267">
    <property type="protein sequence ID" value="AAX33415.1"/>
    <property type="molecule type" value="mRNA"/>
</dbReference>
<dbReference type="EMBL" id="BT150288">
    <property type="protein sequence ID" value="AGV77189.1"/>
    <property type="molecule type" value="mRNA"/>
</dbReference>
<dbReference type="PIR" id="T13384">
    <property type="entry name" value="T13384"/>
</dbReference>
<dbReference type="RefSeq" id="NP_476593.2">
    <property type="nucleotide sequence ID" value="NM_057245.3"/>
</dbReference>
<dbReference type="FunCoup" id="Q9W5E4">
    <property type="interactions" value="311"/>
</dbReference>
<dbReference type="IntAct" id="Q9W5E4">
    <property type="interactions" value="3"/>
</dbReference>
<dbReference type="STRING" id="7227.FBpp0070114"/>
<dbReference type="PaxDb" id="7227-FBpp0070114"/>
<dbReference type="EnsemblMetazoa" id="FBtr0070119">
    <property type="protein sequence ID" value="FBpp0070114"/>
    <property type="gene ID" value="FBgn0001341"/>
</dbReference>
<dbReference type="GeneID" id="31010"/>
<dbReference type="KEGG" id="dme:Dmel_CG6189"/>
<dbReference type="UCSC" id="CG6189-RA">
    <property type="organism name" value="d. melanogaster"/>
</dbReference>
<dbReference type="AGR" id="FB:FBgn0001341"/>
<dbReference type="CTD" id="10514"/>
<dbReference type="FlyBase" id="FBgn0001341">
    <property type="gene designation" value="Mybbp1A"/>
</dbReference>
<dbReference type="VEuPathDB" id="VectorBase:FBgn0001341"/>
<dbReference type="eggNOG" id="KOG1926">
    <property type="taxonomic scope" value="Eukaryota"/>
</dbReference>
<dbReference type="HOGENOM" id="CLU_275239_0_0_1"/>
<dbReference type="InParanoid" id="Q9W5E4"/>
<dbReference type="OMA" id="LQTGHFW"/>
<dbReference type="OrthoDB" id="342531at2759"/>
<dbReference type="PhylomeDB" id="Q9W5E4"/>
<dbReference type="BioGRID-ORCS" id="31010">
    <property type="hits" value="1 hit in 1 CRISPR screen"/>
</dbReference>
<dbReference type="GenomeRNAi" id="31010"/>
<dbReference type="PRO" id="PR:Q9W5E4"/>
<dbReference type="Proteomes" id="UP000000803">
    <property type="component" value="Chromosome X"/>
</dbReference>
<dbReference type="Bgee" id="FBgn0001341">
    <property type="expression patterns" value="Expressed in posterior terminal follicle cell in ovary and 43 other cell types or tissues"/>
</dbReference>
<dbReference type="ExpressionAtlas" id="Q9W5E4">
    <property type="expression patterns" value="baseline and differential"/>
</dbReference>
<dbReference type="GO" id="GO:0005737">
    <property type="term" value="C:cytoplasm"/>
    <property type="evidence" value="ECO:0007669"/>
    <property type="project" value="UniProtKB-SubCell"/>
</dbReference>
<dbReference type="GO" id="GO:0005730">
    <property type="term" value="C:nucleolus"/>
    <property type="evidence" value="ECO:0000318"/>
    <property type="project" value="GO_Central"/>
</dbReference>
<dbReference type="GO" id="GO:0043565">
    <property type="term" value="F:sequence-specific DNA binding"/>
    <property type="evidence" value="ECO:0000318"/>
    <property type="project" value="GO_Central"/>
</dbReference>
<dbReference type="GO" id="GO:0003714">
    <property type="term" value="F:transcription corepressor activity"/>
    <property type="evidence" value="ECO:0000318"/>
    <property type="project" value="GO_Central"/>
</dbReference>
<dbReference type="GO" id="GO:0090070">
    <property type="term" value="P:positive regulation of ribosome biogenesis"/>
    <property type="evidence" value="ECO:0000314"/>
    <property type="project" value="FlyBase"/>
</dbReference>
<dbReference type="GO" id="GO:1901838">
    <property type="term" value="P:positive regulation of transcription of nucleolar large rRNA by RNA polymerase I"/>
    <property type="evidence" value="ECO:0000314"/>
    <property type="project" value="FlyBase"/>
</dbReference>
<dbReference type="GO" id="GO:0042254">
    <property type="term" value="P:ribosome biogenesis"/>
    <property type="evidence" value="ECO:0007669"/>
    <property type="project" value="UniProtKB-KW"/>
</dbReference>
<dbReference type="InterPro" id="IPR016024">
    <property type="entry name" value="ARM-type_fold"/>
</dbReference>
<dbReference type="InterPro" id="IPR007015">
    <property type="entry name" value="DNA_pol_V/MYBBP1A"/>
</dbReference>
<dbReference type="PANTHER" id="PTHR13213:SF2">
    <property type="entry name" value="MYB-BINDING PROTEIN 1A"/>
    <property type="match status" value="1"/>
</dbReference>
<dbReference type="PANTHER" id="PTHR13213">
    <property type="entry name" value="MYB-BINDING PROTEIN 1A FAMILY MEMBER"/>
    <property type="match status" value="1"/>
</dbReference>
<dbReference type="Pfam" id="PF04931">
    <property type="entry name" value="DNA_pol_phi"/>
    <property type="match status" value="1"/>
</dbReference>
<dbReference type="SUPFAM" id="SSF48371">
    <property type="entry name" value="ARM repeat"/>
    <property type="match status" value="1"/>
</dbReference>
<gene>
    <name evidence="4 10" type="primary">Mybbp1A</name>
    <name evidence="10" type="synonym">l(1)Bi</name>
    <name evidence="10" type="ORF">CG6189</name>
</gene>
<protein>
    <recommendedName>
        <fullName evidence="4 10">Myb-binding protein 1A</fullName>
    </recommendedName>
</protein>
<reference evidence="11" key="1">
    <citation type="journal article" date="2000" name="Science">
        <title>The genome sequence of Drosophila melanogaster.</title>
        <authorList>
            <person name="Adams M.D."/>
            <person name="Celniker S.E."/>
            <person name="Holt R.A."/>
            <person name="Evans C.A."/>
            <person name="Gocayne J.D."/>
            <person name="Amanatides P.G."/>
            <person name="Scherer S.E."/>
            <person name="Li P.W."/>
            <person name="Hoskins R.A."/>
            <person name="Galle R.F."/>
            <person name="George R.A."/>
            <person name="Lewis S.E."/>
            <person name="Richards S."/>
            <person name="Ashburner M."/>
            <person name="Henderson S.N."/>
            <person name="Sutton G.G."/>
            <person name="Wortman J.R."/>
            <person name="Yandell M.D."/>
            <person name="Zhang Q."/>
            <person name="Chen L.X."/>
            <person name="Brandon R.C."/>
            <person name="Rogers Y.-H.C."/>
            <person name="Blazej R.G."/>
            <person name="Champe M."/>
            <person name="Pfeiffer B.D."/>
            <person name="Wan K.H."/>
            <person name="Doyle C."/>
            <person name="Baxter E.G."/>
            <person name="Helt G."/>
            <person name="Nelson C.R."/>
            <person name="Miklos G.L.G."/>
            <person name="Abril J.F."/>
            <person name="Agbayani A."/>
            <person name="An H.-J."/>
            <person name="Andrews-Pfannkoch C."/>
            <person name="Baldwin D."/>
            <person name="Ballew R.M."/>
            <person name="Basu A."/>
            <person name="Baxendale J."/>
            <person name="Bayraktaroglu L."/>
            <person name="Beasley E.M."/>
            <person name="Beeson K.Y."/>
            <person name="Benos P.V."/>
            <person name="Berman B.P."/>
            <person name="Bhandari D."/>
            <person name="Bolshakov S."/>
            <person name="Borkova D."/>
            <person name="Botchan M.R."/>
            <person name="Bouck J."/>
            <person name="Brokstein P."/>
            <person name="Brottier P."/>
            <person name="Burtis K.C."/>
            <person name="Busam D.A."/>
            <person name="Butler H."/>
            <person name="Cadieu E."/>
            <person name="Center A."/>
            <person name="Chandra I."/>
            <person name="Cherry J.M."/>
            <person name="Cawley S."/>
            <person name="Dahlke C."/>
            <person name="Davenport L.B."/>
            <person name="Davies P."/>
            <person name="de Pablos B."/>
            <person name="Delcher A."/>
            <person name="Deng Z."/>
            <person name="Mays A.D."/>
            <person name="Dew I."/>
            <person name="Dietz S.M."/>
            <person name="Dodson K."/>
            <person name="Doup L.E."/>
            <person name="Downes M."/>
            <person name="Dugan-Rocha S."/>
            <person name="Dunkov B.C."/>
            <person name="Dunn P."/>
            <person name="Durbin K.J."/>
            <person name="Evangelista C.C."/>
            <person name="Ferraz C."/>
            <person name="Ferriera S."/>
            <person name="Fleischmann W."/>
            <person name="Fosler C."/>
            <person name="Gabrielian A.E."/>
            <person name="Garg N.S."/>
            <person name="Gelbart W.M."/>
            <person name="Glasser K."/>
            <person name="Glodek A."/>
            <person name="Gong F."/>
            <person name="Gorrell J.H."/>
            <person name="Gu Z."/>
            <person name="Guan P."/>
            <person name="Harris M."/>
            <person name="Harris N.L."/>
            <person name="Harvey D.A."/>
            <person name="Heiman T.J."/>
            <person name="Hernandez J.R."/>
            <person name="Houck J."/>
            <person name="Hostin D."/>
            <person name="Houston K.A."/>
            <person name="Howland T.J."/>
            <person name="Wei M.-H."/>
            <person name="Ibegwam C."/>
            <person name="Jalali M."/>
            <person name="Kalush F."/>
            <person name="Karpen G.H."/>
            <person name="Ke Z."/>
            <person name="Kennison J.A."/>
            <person name="Ketchum K.A."/>
            <person name="Kimmel B.E."/>
            <person name="Kodira C.D."/>
            <person name="Kraft C.L."/>
            <person name="Kravitz S."/>
            <person name="Kulp D."/>
            <person name="Lai Z."/>
            <person name="Lasko P."/>
            <person name="Lei Y."/>
            <person name="Levitsky A.A."/>
            <person name="Li J.H."/>
            <person name="Li Z."/>
            <person name="Liang Y."/>
            <person name="Lin X."/>
            <person name="Liu X."/>
            <person name="Mattei B."/>
            <person name="McIntosh T.C."/>
            <person name="McLeod M.P."/>
            <person name="McPherson D."/>
            <person name="Merkulov G."/>
            <person name="Milshina N.V."/>
            <person name="Mobarry C."/>
            <person name="Morris J."/>
            <person name="Moshrefi A."/>
            <person name="Mount S.M."/>
            <person name="Moy M."/>
            <person name="Murphy B."/>
            <person name="Murphy L."/>
            <person name="Muzny D.M."/>
            <person name="Nelson D.L."/>
            <person name="Nelson D.R."/>
            <person name="Nelson K.A."/>
            <person name="Nixon K."/>
            <person name="Nusskern D.R."/>
            <person name="Pacleb J.M."/>
            <person name="Palazzolo M."/>
            <person name="Pittman G.S."/>
            <person name="Pan S."/>
            <person name="Pollard J."/>
            <person name="Puri V."/>
            <person name="Reese M.G."/>
            <person name="Reinert K."/>
            <person name="Remington K."/>
            <person name="Saunders R.D.C."/>
            <person name="Scheeler F."/>
            <person name="Shen H."/>
            <person name="Shue B.C."/>
            <person name="Siden-Kiamos I."/>
            <person name="Simpson M."/>
            <person name="Skupski M.P."/>
            <person name="Smith T.J."/>
            <person name="Spier E."/>
            <person name="Spradling A.C."/>
            <person name="Stapleton M."/>
            <person name="Strong R."/>
            <person name="Sun E."/>
            <person name="Svirskas R."/>
            <person name="Tector C."/>
            <person name="Turner R."/>
            <person name="Venter E."/>
            <person name="Wang A.H."/>
            <person name="Wang X."/>
            <person name="Wang Z.-Y."/>
            <person name="Wassarman D.A."/>
            <person name="Weinstock G.M."/>
            <person name="Weissenbach J."/>
            <person name="Williams S.M."/>
            <person name="Woodage T."/>
            <person name="Worley K.C."/>
            <person name="Wu D."/>
            <person name="Yang S."/>
            <person name="Yao Q.A."/>
            <person name="Ye J."/>
            <person name="Yeh R.-F."/>
            <person name="Zaveri J.S."/>
            <person name="Zhan M."/>
            <person name="Zhang G."/>
            <person name="Zhao Q."/>
            <person name="Zheng L."/>
            <person name="Zheng X.H."/>
            <person name="Zhong F.N."/>
            <person name="Zhong W."/>
            <person name="Zhou X."/>
            <person name="Zhu S.C."/>
            <person name="Zhu X."/>
            <person name="Smith H.O."/>
            <person name="Gibbs R.A."/>
            <person name="Myers E.W."/>
            <person name="Rubin G.M."/>
            <person name="Venter J.C."/>
        </authorList>
    </citation>
    <scope>NUCLEOTIDE SEQUENCE [LARGE SCALE GENOMIC DNA]</scope>
    <source>
        <strain evidence="11">Berkeley</strain>
    </source>
</reference>
<reference evidence="11" key="2">
    <citation type="journal article" date="2002" name="Genome Biol.">
        <title>Annotation of the Drosophila melanogaster euchromatic genome: a systematic review.</title>
        <authorList>
            <person name="Misra S."/>
            <person name="Crosby M.A."/>
            <person name="Mungall C.J."/>
            <person name="Matthews B.B."/>
            <person name="Campbell K.S."/>
            <person name="Hradecky P."/>
            <person name="Huang Y."/>
            <person name="Kaminker J.S."/>
            <person name="Millburn G.H."/>
            <person name="Prochnik S.E."/>
            <person name="Smith C.D."/>
            <person name="Tupy J.L."/>
            <person name="Whitfield E.J."/>
            <person name="Bayraktaroglu L."/>
            <person name="Berman B.P."/>
            <person name="Bettencourt B.R."/>
            <person name="Celniker S.E."/>
            <person name="de Grey A.D.N.J."/>
            <person name="Drysdale R.A."/>
            <person name="Harris N.L."/>
            <person name="Richter J."/>
            <person name="Russo S."/>
            <person name="Schroeder A.J."/>
            <person name="Shu S.Q."/>
            <person name="Stapleton M."/>
            <person name="Yamada C."/>
            <person name="Ashburner M."/>
            <person name="Gelbart W.M."/>
            <person name="Rubin G.M."/>
            <person name="Lewis S.E."/>
        </authorList>
    </citation>
    <scope>GENOME REANNOTATION</scope>
    <source>
        <strain evidence="11">Berkeley</strain>
    </source>
</reference>
<reference evidence="7" key="3">
    <citation type="journal article" date="2002" name="Genome Biol.">
        <title>A Drosophila full-length cDNA resource.</title>
        <authorList>
            <person name="Stapleton M."/>
            <person name="Carlson J.W."/>
            <person name="Brokstein P."/>
            <person name="Yu C."/>
            <person name="Champe M."/>
            <person name="George R.A."/>
            <person name="Guarin H."/>
            <person name="Kronmiller B."/>
            <person name="Pacleb J.M."/>
            <person name="Park S."/>
            <person name="Wan K.H."/>
            <person name="Rubin G.M."/>
            <person name="Celniker S.E."/>
        </authorList>
    </citation>
    <scope>NUCLEOTIDE SEQUENCE [LARGE SCALE MRNA]</scope>
    <source>
        <strain evidence="7">Berkeley</strain>
        <tissue>Embryo</tissue>
    </source>
</reference>
<reference evidence="8 9" key="4">
    <citation type="submission" date="2013-09" db="EMBL/GenBank/DDBJ databases">
        <authorList>
            <person name="Carlson J."/>
            <person name="Booth B."/>
            <person name="Chavez C."/>
            <person name="Frise E."/>
            <person name="George R."/>
            <person name="Pacleb J."/>
            <person name="Park S."/>
            <person name="Wan K."/>
            <person name="Yu C."/>
            <person name="Rubin G.M."/>
            <person name="Stapleton M."/>
            <person name="Celniker S.E."/>
        </authorList>
    </citation>
    <scope>NUCLEOTIDE SEQUENCE [LARGE SCALE MRNA]</scope>
    <source>
        <strain evidence="8 9">Berkeley</strain>
        <tissue evidence="8">Embryo</tissue>
    </source>
</reference>
<reference evidence="5" key="5">
    <citation type="journal article" date="2017" name="Dev. Cell">
        <title>PWP1 Mediates Nutrient-Dependent Growth Control through Nucleolar Regulation of Ribosomal Gene Expression.</title>
        <authorList>
            <person name="Liu Y."/>
            <person name="Mattila J."/>
            <person name="Ventelae S."/>
            <person name="Yadav L."/>
            <person name="Zhang W."/>
            <person name="Lamichane N."/>
            <person name="Sundstroem J."/>
            <person name="Kauko O."/>
            <person name="Grenman R."/>
            <person name="Varjosalo M."/>
            <person name="Westermarck J."/>
            <person name="Hietakangas V."/>
        </authorList>
    </citation>
    <scope>FUNCTION</scope>
    <scope>INTERACTION WITH NCLB</scope>
    <scope>DISRUPTION PHENOTYPE</scope>
</reference>
<sequence>MKSKVDKPVTNGAPNATKTKAKEDRKRAKTQKSEADSQIPAKILKKSKKEKPAETEEKENTASNANLKVSQINKAVFVVFKKMQGSQLTKKMINSLITLLRDDTNAEQRTATTGYVLKRLIRSTGADDMKTVSLAASYIHCILNAVPAIDAFEVLETLKRDLAVGSQQRGKEDSLAAVGQLVTAFCILQTPQFAKAEPKLVTAVFQILAAQLKGREYLVSLCGDILAVSFKQLPAAIFEEYVWPLLQPELNKPLSGLKVNTCDVLLAVHLTFSSVLGRENILASLWPKKPVYTQLFDLYFSGSTIHSDGVYARLASFLVNGGKDMLAAWQQYIDSKQPLKLNAAKACAIQVLSHVLLNFKPREEQLILDIFTPTCVQFLLHECSSVKWDKGEGKKPSLKKLKEICFKFEGSLVLCYEKQFQNDDNKLHLLLKLLEHTLQLDSVISLPRFCQKLINQLSVESLHKLYDYYNNKLYSLEDEDRVSRVHCLNQMQLILNHSKLSQTAKWRQKQLNYLLLAGLFHLDASKKPCEAAQASAFSRQCAARCEEIFLGSLLHKCSGLPGLCQLLQKTLSYLNKELGQPDAESKLRSPRDESLQKAWKQVEKLLERPSKESDVVGQSFEALILFVSLALCTKIPPSITVLEDLIICRKNALQKSKEQVNEELKWQDVLTDALLQLLLQTGHFWREFVQLVATALIPHLEHGNLEQVLEVLNMNKNPLSKKSDGEEESDDELDKEESLKDSSDDSEDEDEDEEEDEGEDDAESHLAQIRESVRQALVNDGDADDDGASSVDWNDVDEEQGERLNAALERSFQMFRPKSRKAQEKERPTKSERIDSTNLLHFRIRALDLLELFITKKPTQSVILDVLHCVFQVYSHCAADSKLQSLREASLKLLKKILARNIELKENQSTAPILEAIEQLMSSGEEHSEEDQENGKQPASRQAKRDIIIWRDRCFAYLVSQASADGEPKKSAVWPLLVEFLELWVAKRRSRLSLASFEALFQSGQWQGVAPLAVVLASHLDVQKTRSFRRAQILKLLSEQGRRLEVAFKDNNSSSKKFEKQIARYVNQLETKASSSKELNLLLKILAQGGEKWQKLREQIQLVAKDLQPNKKVAKQKKQAAAKPMVVEDEEST</sequence>
<proteinExistence type="evidence at protein level"/>
<name>MBB1A_DROME</name>